<sequence>MADILTRIETYKREEIASAKRARPLGEVTAAAKAAPPPRGFTDTIRAKLARGDYALIAEIKKASPSKGLIRADFDPPSLARAYEAGGAACLSVLTDAPSFQGHLDFMVAARAATSLPVLRKDFIFDTYQVVEARAHGADCILIIMAALDDDAAKDIEATALDLGMDVLLEIHNREELDRALKLRSPMIGVNNRNLRTFETTLETSEGLAPYIPKERLMVGESGIFTPADLARLERVGISTFLVGESLMRQADVTAATRTLLKHA</sequence>
<comment type="catalytic activity">
    <reaction evidence="1">
        <text>1-(2-carboxyphenylamino)-1-deoxy-D-ribulose 5-phosphate + H(+) = (1S,2R)-1-C-(indol-3-yl)glycerol 3-phosphate + CO2 + H2O</text>
        <dbReference type="Rhea" id="RHEA:23476"/>
        <dbReference type="ChEBI" id="CHEBI:15377"/>
        <dbReference type="ChEBI" id="CHEBI:15378"/>
        <dbReference type="ChEBI" id="CHEBI:16526"/>
        <dbReference type="ChEBI" id="CHEBI:58613"/>
        <dbReference type="ChEBI" id="CHEBI:58866"/>
        <dbReference type="EC" id="4.1.1.48"/>
    </reaction>
</comment>
<comment type="pathway">
    <text evidence="1">Amino-acid biosynthesis; L-tryptophan biosynthesis; L-tryptophan from chorismate: step 4/5.</text>
</comment>
<comment type="similarity">
    <text evidence="1">Belongs to the TrpC family.</text>
</comment>
<accession>Q3SRJ3</accession>
<organism>
    <name type="scientific">Nitrobacter winogradskyi (strain ATCC 25391 / DSM 10237 / CIP 104748 / NCIMB 11846 / Nb-255)</name>
    <dbReference type="NCBI Taxonomy" id="323098"/>
    <lineage>
        <taxon>Bacteria</taxon>
        <taxon>Pseudomonadati</taxon>
        <taxon>Pseudomonadota</taxon>
        <taxon>Alphaproteobacteria</taxon>
        <taxon>Hyphomicrobiales</taxon>
        <taxon>Nitrobacteraceae</taxon>
        <taxon>Nitrobacter</taxon>
    </lineage>
</organism>
<keyword id="KW-0028">Amino-acid biosynthesis</keyword>
<keyword id="KW-0057">Aromatic amino acid biosynthesis</keyword>
<keyword id="KW-0210">Decarboxylase</keyword>
<keyword id="KW-0456">Lyase</keyword>
<keyword id="KW-1185">Reference proteome</keyword>
<keyword id="KW-0822">Tryptophan biosynthesis</keyword>
<gene>
    <name evidence="1" type="primary">trpC</name>
    <name type="ordered locus">Nwi_1838</name>
</gene>
<protein>
    <recommendedName>
        <fullName evidence="1">Indole-3-glycerol phosphate synthase</fullName>
        <shortName evidence="1">IGPS</shortName>
        <ecNumber evidence="1">4.1.1.48</ecNumber>
    </recommendedName>
</protein>
<feature type="chain" id="PRO_1000018512" description="Indole-3-glycerol phosphate synthase">
    <location>
        <begin position="1"/>
        <end position="264"/>
    </location>
</feature>
<evidence type="ECO:0000255" key="1">
    <source>
        <dbReference type="HAMAP-Rule" id="MF_00134"/>
    </source>
</evidence>
<name>TRPC_NITWN</name>
<dbReference type="EC" id="4.1.1.48" evidence="1"/>
<dbReference type="EMBL" id="CP000115">
    <property type="protein sequence ID" value="ABA05098.1"/>
    <property type="molecule type" value="Genomic_DNA"/>
</dbReference>
<dbReference type="RefSeq" id="WP_011315094.1">
    <property type="nucleotide sequence ID" value="NC_007406.1"/>
</dbReference>
<dbReference type="SMR" id="Q3SRJ3"/>
<dbReference type="STRING" id="323098.Nwi_1838"/>
<dbReference type="KEGG" id="nwi:Nwi_1838"/>
<dbReference type="eggNOG" id="COG0134">
    <property type="taxonomic scope" value="Bacteria"/>
</dbReference>
<dbReference type="HOGENOM" id="CLU_034247_2_0_5"/>
<dbReference type="OrthoDB" id="9804217at2"/>
<dbReference type="UniPathway" id="UPA00035">
    <property type="reaction ID" value="UER00043"/>
</dbReference>
<dbReference type="Proteomes" id="UP000002531">
    <property type="component" value="Chromosome"/>
</dbReference>
<dbReference type="GO" id="GO:0004425">
    <property type="term" value="F:indole-3-glycerol-phosphate synthase activity"/>
    <property type="evidence" value="ECO:0007669"/>
    <property type="project" value="UniProtKB-UniRule"/>
</dbReference>
<dbReference type="GO" id="GO:0004640">
    <property type="term" value="F:phosphoribosylanthranilate isomerase activity"/>
    <property type="evidence" value="ECO:0007669"/>
    <property type="project" value="TreeGrafter"/>
</dbReference>
<dbReference type="GO" id="GO:0000162">
    <property type="term" value="P:L-tryptophan biosynthetic process"/>
    <property type="evidence" value="ECO:0007669"/>
    <property type="project" value="UniProtKB-UniRule"/>
</dbReference>
<dbReference type="CDD" id="cd00331">
    <property type="entry name" value="IGPS"/>
    <property type="match status" value="1"/>
</dbReference>
<dbReference type="FunFam" id="3.20.20.70:FF:000024">
    <property type="entry name" value="Indole-3-glycerol phosphate synthase"/>
    <property type="match status" value="1"/>
</dbReference>
<dbReference type="Gene3D" id="3.20.20.70">
    <property type="entry name" value="Aldolase class I"/>
    <property type="match status" value="1"/>
</dbReference>
<dbReference type="HAMAP" id="MF_00134_B">
    <property type="entry name" value="IGPS_B"/>
    <property type="match status" value="1"/>
</dbReference>
<dbReference type="InterPro" id="IPR013785">
    <property type="entry name" value="Aldolase_TIM"/>
</dbReference>
<dbReference type="InterPro" id="IPR045186">
    <property type="entry name" value="Indole-3-glycerol_P_synth"/>
</dbReference>
<dbReference type="InterPro" id="IPR013798">
    <property type="entry name" value="Indole-3-glycerol_P_synth_dom"/>
</dbReference>
<dbReference type="InterPro" id="IPR001468">
    <property type="entry name" value="Indole-3-GlycerolPSynthase_CS"/>
</dbReference>
<dbReference type="InterPro" id="IPR011060">
    <property type="entry name" value="RibuloseP-bd_barrel"/>
</dbReference>
<dbReference type="NCBIfam" id="NF001370">
    <property type="entry name" value="PRK00278.1-2"/>
    <property type="match status" value="1"/>
</dbReference>
<dbReference type="NCBIfam" id="NF001373">
    <property type="entry name" value="PRK00278.1-6"/>
    <property type="match status" value="1"/>
</dbReference>
<dbReference type="NCBIfam" id="NF001377">
    <property type="entry name" value="PRK00278.2-4"/>
    <property type="match status" value="1"/>
</dbReference>
<dbReference type="PANTHER" id="PTHR22854:SF2">
    <property type="entry name" value="INDOLE-3-GLYCEROL-PHOSPHATE SYNTHASE"/>
    <property type="match status" value="1"/>
</dbReference>
<dbReference type="PANTHER" id="PTHR22854">
    <property type="entry name" value="TRYPTOPHAN BIOSYNTHESIS PROTEIN"/>
    <property type="match status" value="1"/>
</dbReference>
<dbReference type="Pfam" id="PF00218">
    <property type="entry name" value="IGPS"/>
    <property type="match status" value="1"/>
</dbReference>
<dbReference type="SUPFAM" id="SSF51366">
    <property type="entry name" value="Ribulose-phoshate binding barrel"/>
    <property type="match status" value="1"/>
</dbReference>
<dbReference type="PROSITE" id="PS00614">
    <property type="entry name" value="IGPS"/>
    <property type="match status" value="1"/>
</dbReference>
<proteinExistence type="inferred from homology"/>
<reference key="1">
    <citation type="journal article" date="2006" name="Appl. Environ. Microbiol.">
        <title>Genome sequence of the chemolithoautotrophic nitrite-oxidizing bacterium Nitrobacter winogradskyi Nb-255.</title>
        <authorList>
            <person name="Starkenburg S.R."/>
            <person name="Chain P.S.G."/>
            <person name="Sayavedra-Soto L.A."/>
            <person name="Hauser L."/>
            <person name="Land M.L."/>
            <person name="Larimer F.W."/>
            <person name="Malfatti S.A."/>
            <person name="Klotz M.G."/>
            <person name="Bottomley P.J."/>
            <person name="Arp D.J."/>
            <person name="Hickey W.J."/>
        </authorList>
    </citation>
    <scope>NUCLEOTIDE SEQUENCE [LARGE SCALE GENOMIC DNA]</scope>
    <source>
        <strain>ATCC 25391 / DSM 10237 / CIP 104748 / NCIMB 11846 / Nb-255</strain>
    </source>
</reference>